<name>RL35_RHIME</name>
<dbReference type="EMBL" id="AL591688">
    <property type="protein sequence ID" value="CAC41720.1"/>
    <property type="molecule type" value="Genomic_DNA"/>
</dbReference>
<dbReference type="RefSeq" id="NP_384389.1">
    <property type="nucleotide sequence ID" value="NC_003047.1"/>
</dbReference>
<dbReference type="RefSeq" id="WP_004435490.1">
    <property type="nucleotide sequence ID" value="NC_003047.1"/>
</dbReference>
<dbReference type="SMR" id="Q92ST2"/>
<dbReference type="EnsemblBacteria" id="CAC41720">
    <property type="protein sequence ID" value="CAC41720"/>
    <property type="gene ID" value="SMc00363"/>
</dbReference>
<dbReference type="GeneID" id="89574609"/>
<dbReference type="KEGG" id="sme:SMc00363"/>
<dbReference type="PATRIC" id="fig|266834.11.peg.1652"/>
<dbReference type="eggNOG" id="COG0291">
    <property type="taxonomic scope" value="Bacteria"/>
</dbReference>
<dbReference type="HOGENOM" id="CLU_169643_2_1_5"/>
<dbReference type="OrthoDB" id="9804851at2"/>
<dbReference type="Proteomes" id="UP000001976">
    <property type="component" value="Chromosome"/>
</dbReference>
<dbReference type="GO" id="GO:1990904">
    <property type="term" value="C:ribonucleoprotein complex"/>
    <property type="evidence" value="ECO:0007669"/>
    <property type="project" value="UniProtKB-KW"/>
</dbReference>
<dbReference type="GO" id="GO:0005840">
    <property type="term" value="C:ribosome"/>
    <property type="evidence" value="ECO:0007669"/>
    <property type="project" value="UniProtKB-KW"/>
</dbReference>
<dbReference type="GO" id="GO:0003735">
    <property type="term" value="F:structural constituent of ribosome"/>
    <property type="evidence" value="ECO:0007669"/>
    <property type="project" value="InterPro"/>
</dbReference>
<dbReference type="GO" id="GO:0006412">
    <property type="term" value="P:translation"/>
    <property type="evidence" value="ECO:0007669"/>
    <property type="project" value="UniProtKB-UniRule"/>
</dbReference>
<dbReference type="FunFam" id="4.10.410.60:FF:000001">
    <property type="entry name" value="50S ribosomal protein L35"/>
    <property type="match status" value="1"/>
</dbReference>
<dbReference type="Gene3D" id="4.10.410.60">
    <property type="match status" value="1"/>
</dbReference>
<dbReference type="HAMAP" id="MF_00514">
    <property type="entry name" value="Ribosomal_bL35"/>
    <property type="match status" value="1"/>
</dbReference>
<dbReference type="InterPro" id="IPR001706">
    <property type="entry name" value="Ribosomal_bL35"/>
</dbReference>
<dbReference type="InterPro" id="IPR021137">
    <property type="entry name" value="Ribosomal_bL35-like"/>
</dbReference>
<dbReference type="InterPro" id="IPR018265">
    <property type="entry name" value="Ribosomal_bL35_CS"/>
</dbReference>
<dbReference type="InterPro" id="IPR037229">
    <property type="entry name" value="Ribosomal_bL35_sf"/>
</dbReference>
<dbReference type="NCBIfam" id="TIGR00001">
    <property type="entry name" value="rpmI_bact"/>
    <property type="match status" value="1"/>
</dbReference>
<dbReference type="Pfam" id="PF01632">
    <property type="entry name" value="Ribosomal_L35p"/>
    <property type="match status" value="1"/>
</dbReference>
<dbReference type="PRINTS" id="PR00064">
    <property type="entry name" value="RIBOSOMALL35"/>
</dbReference>
<dbReference type="SUPFAM" id="SSF143034">
    <property type="entry name" value="L35p-like"/>
    <property type="match status" value="1"/>
</dbReference>
<dbReference type="PROSITE" id="PS00936">
    <property type="entry name" value="RIBOSOMAL_L35"/>
    <property type="match status" value="1"/>
</dbReference>
<comment type="similarity">
    <text evidence="1">Belongs to the bacterial ribosomal protein bL35 family.</text>
</comment>
<organism>
    <name type="scientific">Rhizobium meliloti (strain 1021)</name>
    <name type="common">Ensifer meliloti</name>
    <name type="synonym">Sinorhizobium meliloti</name>
    <dbReference type="NCBI Taxonomy" id="266834"/>
    <lineage>
        <taxon>Bacteria</taxon>
        <taxon>Pseudomonadati</taxon>
        <taxon>Pseudomonadota</taxon>
        <taxon>Alphaproteobacteria</taxon>
        <taxon>Hyphomicrobiales</taxon>
        <taxon>Rhizobiaceae</taxon>
        <taxon>Sinorhizobium/Ensifer group</taxon>
        <taxon>Sinorhizobium</taxon>
    </lineage>
</organism>
<sequence length="67" mass="7386">MPKMKTKSSAKKRFKITATGKVRAAAAGKRHGMIKRSNKFIRDARGTMVLAEPDGKKVVKNYLPNGL</sequence>
<evidence type="ECO:0000255" key="1">
    <source>
        <dbReference type="HAMAP-Rule" id="MF_00514"/>
    </source>
</evidence>
<evidence type="ECO:0000305" key="2"/>
<feature type="chain" id="PRO_0000177408" description="Large ribosomal subunit protein bL35">
    <location>
        <begin position="1"/>
        <end position="67"/>
    </location>
</feature>
<accession>Q92ST2</accession>
<reference key="1">
    <citation type="journal article" date="2001" name="Proc. Natl. Acad. Sci. U.S.A.">
        <title>Analysis of the chromosome sequence of the legume symbiont Sinorhizobium meliloti strain 1021.</title>
        <authorList>
            <person name="Capela D."/>
            <person name="Barloy-Hubler F."/>
            <person name="Gouzy J."/>
            <person name="Bothe G."/>
            <person name="Ampe F."/>
            <person name="Batut J."/>
            <person name="Boistard P."/>
            <person name="Becker A."/>
            <person name="Boutry M."/>
            <person name="Cadieu E."/>
            <person name="Dreano S."/>
            <person name="Gloux S."/>
            <person name="Godrie T."/>
            <person name="Goffeau A."/>
            <person name="Kahn D."/>
            <person name="Kiss E."/>
            <person name="Lelaure V."/>
            <person name="Masuy D."/>
            <person name="Pohl T."/>
            <person name="Portetelle D."/>
            <person name="Puehler A."/>
            <person name="Purnelle B."/>
            <person name="Ramsperger U."/>
            <person name="Renard C."/>
            <person name="Thebault P."/>
            <person name="Vandenbol M."/>
            <person name="Weidner S."/>
            <person name="Galibert F."/>
        </authorList>
    </citation>
    <scope>NUCLEOTIDE SEQUENCE [LARGE SCALE GENOMIC DNA]</scope>
    <source>
        <strain>1021</strain>
    </source>
</reference>
<reference key="2">
    <citation type="journal article" date="2001" name="Science">
        <title>The composite genome of the legume symbiont Sinorhizobium meliloti.</title>
        <authorList>
            <person name="Galibert F."/>
            <person name="Finan T.M."/>
            <person name="Long S.R."/>
            <person name="Puehler A."/>
            <person name="Abola P."/>
            <person name="Ampe F."/>
            <person name="Barloy-Hubler F."/>
            <person name="Barnett M.J."/>
            <person name="Becker A."/>
            <person name="Boistard P."/>
            <person name="Bothe G."/>
            <person name="Boutry M."/>
            <person name="Bowser L."/>
            <person name="Buhrmester J."/>
            <person name="Cadieu E."/>
            <person name="Capela D."/>
            <person name="Chain P."/>
            <person name="Cowie A."/>
            <person name="Davis R.W."/>
            <person name="Dreano S."/>
            <person name="Federspiel N.A."/>
            <person name="Fisher R.F."/>
            <person name="Gloux S."/>
            <person name="Godrie T."/>
            <person name="Goffeau A."/>
            <person name="Golding B."/>
            <person name="Gouzy J."/>
            <person name="Gurjal M."/>
            <person name="Hernandez-Lucas I."/>
            <person name="Hong A."/>
            <person name="Huizar L."/>
            <person name="Hyman R.W."/>
            <person name="Jones T."/>
            <person name="Kahn D."/>
            <person name="Kahn M.L."/>
            <person name="Kalman S."/>
            <person name="Keating D.H."/>
            <person name="Kiss E."/>
            <person name="Komp C."/>
            <person name="Lelaure V."/>
            <person name="Masuy D."/>
            <person name="Palm C."/>
            <person name="Peck M.C."/>
            <person name="Pohl T.M."/>
            <person name="Portetelle D."/>
            <person name="Purnelle B."/>
            <person name="Ramsperger U."/>
            <person name="Surzycki R."/>
            <person name="Thebault P."/>
            <person name="Vandenbol M."/>
            <person name="Vorhoelter F.J."/>
            <person name="Weidner S."/>
            <person name="Wells D.H."/>
            <person name="Wong K."/>
            <person name="Yeh K.-C."/>
            <person name="Batut J."/>
        </authorList>
    </citation>
    <scope>NUCLEOTIDE SEQUENCE [LARGE SCALE GENOMIC DNA]</scope>
    <source>
        <strain>1021</strain>
    </source>
</reference>
<proteinExistence type="inferred from homology"/>
<gene>
    <name evidence="1" type="primary">rpmI</name>
    <name type="ordered locus">R00283</name>
    <name type="ORF">SMc00363</name>
</gene>
<keyword id="KW-1185">Reference proteome</keyword>
<keyword id="KW-0687">Ribonucleoprotein</keyword>
<keyword id="KW-0689">Ribosomal protein</keyword>
<protein>
    <recommendedName>
        <fullName evidence="1">Large ribosomal subunit protein bL35</fullName>
    </recommendedName>
    <alternativeName>
        <fullName evidence="2">50S ribosomal protein L35</fullName>
    </alternativeName>
</protein>